<comment type="function">
    <text evidence="1">The UvrABC repair system catalyzes the recognition and processing of DNA lesions. UvrC both incises the 5' and 3' sides of the lesion. The N-terminal half is responsible for the 3' incision and the C-terminal half is responsible for the 5' incision.</text>
</comment>
<comment type="subunit">
    <text evidence="1">Interacts with UvrB in an incision complex.</text>
</comment>
<comment type="subcellular location">
    <subcellularLocation>
        <location evidence="1">Cytoplasm</location>
    </subcellularLocation>
</comment>
<comment type="similarity">
    <text evidence="1">Belongs to the UvrC family.</text>
</comment>
<protein>
    <recommendedName>
        <fullName evidence="1">UvrABC system protein C</fullName>
        <shortName evidence="1">Protein UvrC</shortName>
    </recommendedName>
    <alternativeName>
        <fullName evidence="1">Excinuclease ABC subunit C</fullName>
    </alternativeName>
</protein>
<reference key="1">
    <citation type="journal article" date="2008" name="PLoS ONE">
        <title>Genome sequence of the saprophyte Leptospira biflexa provides insights into the evolution of Leptospira and the pathogenesis of leptospirosis.</title>
        <authorList>
            <person name="Picardeau M."/>
            <person name="Bulach D.M."/>
            <person name="Bouchier C."/>
            <person name="Zuerner R.L."/>
            <person name="Zidane N."/>
            <person name="Wilson P.J."/>
            <person name="Creno S."/>
            <person name="Kuczek E.S."/>
            <person name="Bommezzadri S."/>
            <person name="Davis J.C."/>
            <person name="McGrath A."/>
            <person name="Johnson M.J."/>
            <person name="Boursaux-Eude C."/>
            <person name="Seemann T."/>
            <person name="Rouy Z."/>
            <person name="Coppel R.L."/>
            <person name="Rood J.I."/>
            <person name="Lajus A."/>
            <person name="Davies J.K."/>
            <person name="Medigue C."/>
            <person name="Adler B."/>
        </authorList>
    </citation>
    <scope>NUCLEOTIDE SEQUENCE [LARGE SCALE GENOMIC DNA]</scope>
    <source>
        <strain>Patoc 1 / Ames</strain>
    </source>
</reference>
<accession>B0SB16</accession>
<organism>
    <name type="scientific">Leptospira biflexa serovar Patoc (strain Patoc 1 / Ames)</name>
    <dbReference type="NCBI Taxonomy" id="355278"/>
    <lineage>
        <taxon>Bacteria</taxon>
        <taxon>Pseudomonadati</taxon>
        <taxon>Spirochaetota</taxon>
        <taxon>Spirochaetia</taxon>
        <taxon>Leptospirales</taxon>
        <taxon>Leptospiraceae</taxon>
        <taxon>Leptospira</taxon>
    </lineage>
</organism>
<dbReference type="EMBL" id="CP000777">
    <property type="protein sequence ID" value="ABZ94522.1"/>
    <property type="molecule type" value="Genomic_DNA"/>
</dbReference>
<dbReference type="RefSeq" id="WP_012389048.1">
    <property type="nucleotide sequence ID" value="NC_010842.1"/>
</dbReference>
<dbReference type="SMR" id="B0SB16"/>
<dbReference type="KEGG" id="lbf:LBF_2022"/>
<dbReference type="HOGENOM" id="CLU_014841_3_2_12"/>
<dbReference type="GO" id="GO:0005737">
    <property type="term" value="C:cytoplasm"/>
    <property type="evidence" value="ECO:0007669"/>
    <property type="project" value="UniProtKB-SubCell"/>
</dbReference>
<dbReference type="GO" id="GO:0009380">
    <property type="term" value="C:excinuclease repair complex"/>
    <property type="evidence" value="ECO:0007669"/>
    <property type="project" value="InterPro"/>
</dbReference>
<dbReference type="GO" id="GO:0003677">
    <property type="term" value="F:DNA binding"/>
    <property type="evidence" value="ECO:0007669"/>
    <property type="project" value="UniProtKB-UniRule"/>
</dbReference>
<dbReference type="GO" id="GO:0009381">
    <property type="term" value="F:excinuclease ABC activity"/>
    <property type="evidence" value="ECO:0007669"/>
    <property type="project" value="UniProtKB-UniRule"/>
</dbReference>
<dbReference type="GO" id="GO:0006289">
    <property type="term" value="P:nucleotide-excision repair"/>
    <property type="evidence" value="ECO:0007669"/>
    <property type="project" value="UniProtKB-UniRule"/>
</dbReference>
<dbReference type="GO" id="GO:0009432">
    <property type="term" value="P:SOS response"/>
    <property type="evidence" value="ECO:0007669"/>
    <property type="project" value="UniProtKB-UniRule"/>
</dbReference>
<dbReference type="CDD" id="cd10434">
    <property type="entry name" value="GIY-YIG_UvrC_Cho"/>
    <property type="match status" value="1"/>
</dbReference>
<dbReference type="FunFam" id="3.40.1440.10:FF:000001">
    <property type="entry name" value="UvrABC system protein C"/>
    <property type="match status" value="1"/>
</dbReference>
<dbReference type="Gene3D" id="1.10.150.20">
    <property type="entry name" value="5' to 3' exonuclease, C-terminal subdomain"/>
    <property type="match status" value="1"/>
</dbReference>
<dbReference type="Gene3D" id="3.40.1440.10">
    <property type="entry name" value="GIY-YIG endonuclease"/>
    <property type="match status" value="1"/>
</dbReference>
<dbReference type="Gene3D" id="3.30.420.340">
    <property type="entry name" value="UvrC, RNAse H endonuclease domain"/>
    <property type="match status" value="1"/>
</dbReference>
<dbReference type="HAMAP" id="MF_00203">
    <property type="entry name" value="UvrC"/>
    <property type="match status" value="1"/>
</dbReference>
<dbReference type="InterPro" id="IPR000305">
    <property type="entry name" value="GIY-YIG_endonuc"/>
</dbReference>
<dbReference type="InterPro" id="IPR035901">
    <property type="entry name" value="GIY-YIG_endonuc_sf"/>
</dbReference>
<dbReference type="InterPro" id="IPR047296">
    <property type="entry name" value="GIY-YIG_UvrC_Cho"/>
</dbReference>
<dbReference type="InterPro" id="IPR003583">
    <property type="entry name" value="Hlx-hairpin-Hlx_DNA-bd_motif"/>
</dbReference>
<dbReference type="InterPro" id="IPR010994">
    <property type="entry name" value="RuvA_2-like"/>
</dbReference>
<dbReference type="InterPro" id="IPR001943">
    <property type="entry name" value="UVR_dom"/>
</dbReference>
<dbReference type="InterPro" id="IPR036876">
    <property type="entry name" value="UVR_dom_sf"/>
</dbReference>
<dbReference type="InterPro" id="IPR050066">
    <property type="entry name" value="UvrABC_protein_C"/>
</dbReference>
<dbReference type="InterPro" id="IPR004791">
    <property type="entry name" value="UvrC"/>
</dbReference>
<dbReference type="InterPro" id="IPR001162">
    <property type="entry name" value="UvrC_RNase_H_dom"/>
</dbReference>
<dbReference type="InterPro" id="IPR038476">
    <property type="entry name" value="UvrC_RNase_H_dom_sf"/>
</dbReference>
<dbReference type="NCBIfam" id="NF001824">
    <property type="entry name" value="PRK00558.1-5"/>
    <property type="match status" value="1"/>
</dbReference>
<dbReference type="NCBIfam" id="TIGR00194">
    <property type="entry name" value="uvrC"/>
    <property type="match status" value="1"/>
</dbReference>
<dbReference type="PANTHER" id="PTHR30562:SF1">
    <property type="entry name" value="UVRABC SYSTEM PROTEIN C"/>
    <property type="match status" value="1"/>
</dbReference>
<dbReference type="PANTHER" id="PTHR30562">
    <property type="entry name" value="UVRC/OXIDOREDUCTASE"/>
    <property type="match status" value="1"/>
</dbReference>
<dbReference type="Pfam" id="PF01541">
    <property type="entry name" value="GIY-YIG"/>
    <property type="match status" value="1"/>
</dbReference>
<dbReference type="Pfam" id="PF02151">
    <property type="entry name" value="UVR"/>
    <property type="match status" value="1"/>
</dbReference>
<dbReference type="Pfam" id="PF22920">
    <property type="entry name" value="UvrC_RNaseH"/>
    <property type="match status" value="1"/>
</dbReference>
<dbReference type="Pfam" id="PF08459">
    <property type="entry name" value="UvrC_RNaseH_dom"/>
    <property type="match status" value="1"/>
</dbReference>
<dbReference type="SMART" id="SM00465">
    <property type="entry name" value="GIYc"/>
    <property type="match status" value="1"/>
</dbReference>
<dbReference type="SMART" id="SM00278">
    <property type="entry name" value="HhH1"/>
    <property type="match status" value="2"/>
</dbReference>
<dbReference type="SUPFAM" id="SSF46600">
    <property type="entry name" value="C-terminal UvrC-binding domain of UvrB"/>
    <property type="match status" value="1"/>
</dbReference>
<dbReference type="SUPFAM" id="SSF82771">
    <property type="entry name" value="GIY-YIG endonuclease"/>
    <property type="match status" value="1"/>
</dbReference>
<dbReference type="SUPFAM" id="SSF47781">
    <property type="entry name" value="RuvA domain 2-like"/>
    <property type="match status" value="1"/>
</dbReference>
<dbReference type="PROSITE" id="PS50164">
    <property type="entry name" value="GIY_YIG"/>
    <property type="match status" value="1"/>
</dbReference>
<dbReference type="PROSITE" id="PS50151">
    <property type="entry name" value="UVR"/>
    <property type="match status" value="1"/>
</dbReference>
<dbReference type="PROSITE" id="PS50165">
    <property type="entry name" value="UVRC"/>
    <property type="match status" value="1"/>
</dbReference>
<gene>
    <name evidence="1" type="primary">uvrC</name>
    <name type="ordered locus">LBF_2022</name>
</gene>
<name>UVRC_LEPBA</name>
<sequence length="614" mass="70251">MKDSLVLKTIQEKIKNLGSLPGCYLWKNELGQVIYVGKALKLQSRVRSYLNPNQKDRKTRALFVELYDLDWIATGTEKEALLLEATLIKKYNPKFNVRLKDDKKYPFLCVSTSEDYPMVFLTRKVKDNGDRYFGPFTDVKAARDTLELIHRIFPIRKTKLKLPLPKPQRPCLNFHMGRCLGPCQGNVTKDTYSELVDEILRFLEGKKERLVADLKKAMMDASSKMEYERAGFLKQRIEKINQLREKQTVVSMDGGDEDILGISKREDEGQILILEVRGGRLEGKKSFPLTGLSFSDDEEAFTSFLRDYYLNVTVLPSVVYLPTSAKGNYDVFLEAILEKFGTSIKLKFPEMGPKKSLLRLAEKNADLSLTERILATKLRDQTVAMKELQEKLNLPTLPRTIECYDISHFQGSLPVASGVMFVEGKPYKPGYRHYKMRGYEGINDPGMIHEVIARRLSHLVNEEEPLPDLIVIDGGLTQLSRAAEAANALDLGHIPMVGLAKKREEIYFPGEKHPYSFDQHSPMMRLLRNLRDEAHRFGVTFQRLQRKKKALKSILDDIPDIGASRRKSILMYFQAKKKVTDATRQELEKVQGIGPVLAEKIFTNIQNLKKIEPK</sequence>
<proteinExistence type="inferred from homology"/>
<feature type="chain" id="PRO_1000099498" description="UvrABC system protein C">
    <location>
        <begin position="1"/>
        <end position="614"/>
    </location>
</feature>
<feature type="domain" description="GIY-YIG" evidence="1">
    <location>
        <begin position="19"/>
        <end position="97"/>
    </location>
</feature>
<feature type="domain" description="UVR" evidence="1">
    <location>
        <begin position="208"/>
        <end position="243"/>
    </location>
</feature>
<evidence type="ECO:0000255" key="1">
    <source>
        <dbReference type="HAMAP-Rule" id="MF_00203"/>
    </source>
</evidence>
<keyword id="KW-0963">Cytoplasm</keyword>
<keyword id="KW-0227">DNA damage</keyword>
<keyword id="KW-0228">DNA excision</keyword>
<keyword id="KW-0234">DNA repair</keyword>
<keyword id="KW-0267">Excision nuclease</keyword>
<keyword id="KW-0742">SOS response</keyword>